<evidence type="ECO:0000250" key="1">
    <source>
        <dbReference type="UniProtKB" id="O14618"/>
    </source>
</evidence>
<evidence type="ECO:0000256" key="2">
    <source>
        <dbReference type="SAM" id="MobiDB-lite"/>
    </source>
</evidence>
<evidence type="ECO:0000269" key="3">
    <source>
    </source>
</evidence>
<evidence type="ECO:0000305" key="4"/>
<proteinExistence type="inferred from homology"/>
<feature type="chain" id="PRO_0000213547" description="Superoxide dismutase 1 copper chaperone">
    <location>
        <begin position="1"/>
        <end position="297"/>
    </location>
</feature>
<feature type="region of interest" description="Disordered" evidence="2">
    <location>
        <begin position="222"/>
        <end position="263"/>
    </location>
</feature>
<feature type="compositionally biased region" description="Low complexity" evidence="2">
    <location>
        <begin position="234"/>
        <end position="257"/>
    </location>
</feature>
<feature type="binding site" evidence="1">
    <location>
        <position position="11"/>
    </location>
    <ligand>
        <name>Cu cation</name>
        <dbReference type="ChEBI" id="CHEBI:23378"/>
        <label>1</label>
    </ligand>
</feature>
<name>CCS1_SCHPO</name>
<accession>Q10357</accession>
<gene>
    <name type="primary">ccs1</name>
    <name type="synonym">pccs</name>
    <name type="ORF">SPAC22E12.04</name>
</gene>
<protein>
    <recommendedName>
        <fullName>Superoxide dismutase 1 copper chaperone</fullName>
    </recommendedName>
</protein>
<reference key="1">
    <citation type="journal article" date="2002" name="Nature">
        <title>The genome sequence of Schizosaccharomyces pombe.</title>
        <authorList>
            <person name="Wood V."/>
            <person name="Gwilliam R."/>
            <person name="Rajandream M.A."/>
            <person name="Lyne M.H."/>
            <person name="Lyne R."/>
            <person name="Stewart A."/>
            <person name="Sgouros J.G."/>
            <person name="Peat N."/>
            <person name="Hayles J."/>
            <person name="Baker S.G."/>
            <person name="Basham D."/>
            <person name="Bowman S."/>
            <person name="Brooks K."/>
            <person name="Brown D."/>
            <person name="Brown S."/>
            <person name="Chillingworth T."/>
            <person name="Churcher C.M."/>
            <person name="Collins M."/>
            <person name="Connor R."/>
            <person name="Cronin A."/>
            <person name="Davis P."/>
            <person name="Feltwell T."/>
            <person name="Fraser A."/>
            <person name="Gentles S."/>
            <person name="Goble A."/>
            <person name="Hamlin N."/>
            <person name="Harris D.E."/>
            <person name="Hidalgo J."/>
            <person name="Hodgson G."/>
            <person name="Holroyd S."/>
            <person name="Hornsby T."/>
            <person name="Howarth S."/>
            <person name="Huckle E.J."/>
            <person name="Hunt S."/>
            <person name="Jagels K."/>
            <person name="James K.D."/>
            <person name="Jones L."/>
            <person name="Jones M."/>
            <person name="Leather S."/>
            <person name="McDonald S."/>
            <person name="McLean J."/>
            <person name="Mooney P."/>
            <person name="Moule S."/>
            <person name="Mungall K.L."/>
            <person name="Murphy L.D."/>
            <person name="Niblett D."/>
            <person name="Odell C."/>
            <person name="Oliver K."/>
            <person name="O'Neil S."/>
            <person name="Pearson D."/>
            <person name="Quail M.A."/>
            <person name="Rabbinowitsch E."/>
            <person name="Rutherford K.M."/>
            <person name="Rutter S."/>
            <person name="Saunders D."/>
            <person name="Seeger K."/>
            <person name="Sharp S."/>
            <person name="Skelton J."/>
            <person name="Simmonds M.N."/>
            <person name="Squares R."/>
            <person name="Squares S."/>
            <person name="Stevens K."/>
            <person name="Taylor K."/>
            <person name="Taylor R.G."/>
            <person name="Tivey A."/>
            <person name="Walsh S.V."/>
            <person name="Warren T."/>
            <person name="Whitehead S."/>
            <person name="Woodward J.R."/>
            <person name="Volckaert G."/>
            <person name="Aert R."/>
            <person name="Robben J."/>
            <person name="Grymonprez B."/>
            <person name="Weltjens I."/>
            <person name="Vanstreels E."/>
            <person name="Rieger M."/>
            <person name="Schaefer M."/>
            <person name="Mueller-Auer S."/>
            <person name="Gabel C."/>
            <person name="Fuchs M."/>
            <person name="Duesterhoeft A."/>
            <person name="Fritzc C."/>
            <person name="Holzer E."/>
            <person name="Moestl D."/>
            <person name="Hilbert H."/>
            <person name="Borzym K."/>
            <person name="Langer I."/>
            <person name="Beck A."/>
            <person name="Lehrach H."/>
            <person name="Reinhardt R."/>
            <person name="Pohl T.M."/>
            <person name="Eger P."/>
            <person name="Zimmermann W."/>
            <person name="Wedler H."/>
            <person name="Wambutt R."/>
            <person name="Purnelle B."/>
            <person name="Goffeau A."/>
            <person name="Cadieu E."/>
            <person name="Dreano S."/>
            <person name="Gloux S."/>
            <person name="Lelaure V."/>
            <person name="Mottier S."/>
            <person name="Galibert F."/>
            <person name="Aves S.J."/>
            <person name="Xiang Z."/>
            <person name="Hunt C."/>
            <person name="Moore K."/>
            <person name="Hurst S.M."/>
            <person name="Lucas M."/>
            <person name="Rochet M."/>
            <person name="Gaillardin C."/>
            <person name="Tallada V.A."/>
            <person name="Garzon A."/>
            <person name="Thode G."/>
            <person name="Daga R.R."/>
            <person name="Cruzado L."/>
            <person name="Jimenez J."/>
            <person name="Sanchez M."/>
            <person name="del Rey F."/>
            <person name="Benito J."/>
            <person name="Dominguez A."/>
            <person name="Revuelta J.L."/>
            <person name="Moreno S."/>
            <person name="Armstrong J."/>
            <person name="Forsburg S.L."/>
            <person name="Cerutti L."/>
            <person name="Lowe T."/>
            <person name="McCombie W.R."/>
            <person name="Paulsen I."/>
            <person name="Potashkin J."/>
            <person name="Shpakovski G.V."/>
            <person name="Ussery D."/>
            <person name="Barrell B.G."/>
            <person name="Nurse P."/>
        </authorList>
    </citation>
    <scope>NUCLEOTIDE SEQUENCE [LARGE SCALE GENOMIC DNA]</scope>
    <source>
        <strain>972 / ATCC 24843</strain>
    </source>
</reference>
<reference key="2">
    <citation type="journal article" date="2004" name="J. Biol. Chem.">
        <title>The Schizosaccharomyces pombe Pccs protein functions in both copper trafficking and metal detoxification pathways.</title>
        <authorList>
            <person name="Laliberte J."/>
            <person name="Whitson L.J."/>
            <person name="Beaudoin J."/>
            <person name="Holloway S.P."/>
            <person name="Hart P.J."/>
            <person name="Labbe S."/>
        </authorList>
    </citation>
    <scope>FUNCTION</scope>
    <scope>SUBCELLULAR LOCATION</scope>
</reference>
<sequence>MFEVEYLIKDCDDVNKNTLEQEFQDLNIEDWKWDAATGQLIVKGSVSPSKVLRRLENATSKPILIRGASNKESGVSILYEANEDITQIPKVYGLCRFIPTEEKIFLDLIATQLLPNREYTGLVTISGDISRGLKSAGDSLVTLFNANSNEQGKIVLDKEVSGSLPNWIGHCFVLKCVDDSDSATMGIISRSAGLGQNTKQICACTGKSLWTEHAELKSVNEGSSCCSKKDSSPSEKPSCCSQEKKSCCSSKKPSCCSQEKKGCCSTEKTSCCSQEKKSCCTSEKPSCCSNGKSTVCA</sequence>
<organism>
    <name type="scientific">Schizosaccharomyces pombe (strain 972 / ATCC 24843)</name>
    <name type="common">Fission yeast</name>
    <dbReference type="NCBI Taxonomy" id="284812"/>
    <lineage>
        <taxon>Eukaryota</taxon>
        <taxon>Fungi</taxon>
        <taxon>Dikarya</taxon>
        <taxon>Ascomycota</taxon>
        <taxon>Taphrinomycotina</taxon>
        <taxon>Schizosaccharomycetes</taxon>
        <taxon>Schizosaccharomycetales</taxon>
        <taxon>Schizosaccharomycetaceae</taxon>
        <taxon>Schizosaccharomyces</taxon>
    </lineage>
</organism>
<keyword id="KW-0143">Chaperone</keyword>
<keyword id="KW-0186">Copper</keyword>
<keyword id="KW-0963">Cytoplasm</keyword>
<keyword id="KW-0479">Metal-binding</keyword>
<keyword id="KW-1185">Reference proteome</keyword>
<dbReference type="EMBL" id="CU329670">
    <property type="protein sequence ID" value="CAA93891.1"/>
    <property type="molecule type" value="Genomic_DNA"/>
</dbReference>
<dbReference type="PIR" id="T38161">
    <property type="entry name" value="T38161"/>
</dbReference>
<dbReference type="RefSeq" id="NP_594830.1">
    <property type="nucleotide sequence ID" value="NM_001020259.2"/>
</dbReference>
<dbReference type="SMR" id="Q10357"/>
<dbReference type="BioGRID" id="278294">
    <property type="interactions" value="3"/>
</dbReference>
<dbReference type="FunCoup" id="Q10357">
    <property type="interactions" value="37"/>
</dbReference>
<dbReference type="STRING" id="284812.Q10357"/>
<dbReference type="iPTMnet" id="Q10357"/>
<dbReference type="PaxDb" id="4896-SPAC22E12.04.1"/>
<dbReference type="EnsemblFungi" id="SPAC22E12.04.1">
    <property type="protein sequence ID" value="SPAC22E12.04.1:pep"/>
    <property type="gene ID" value="SPAC22E12.04"/>
</dbReference>
<dbReference type="PomBase" id="SPAC22E12.04">
    <property type="gene designation" value="ccs1"/>
</dbReference>
<dbReference type="VEuPathDB" id="FungiDB:SPAC22E12.04"/>
<dbReference type="eggNOG" id="KOG0441">
    <property type="taxonomic scope" value="Eukaryota"/>
</dbReference>
<dbReference type="HOGENOM" id="CLU_056632_0_0_1"/>
<dbReference type="InParanoid" id="Q10357"/>
<dbReference type="PhylomeDB" id="Q10357"/>
<dbReference type="PRO" id="PR:Q10357"/>
<dbReference type="Proteomes" id="UP000002485">
    <property type="component" value="Chromosome I"/>
</dbReference>
<dbReference type="GO" id="GO:0005829">
    <property type="term" value="C:cytosol"/>
    <property type="evidence" value="ECO:0007005"/>
    <property type="project" value="PomBase"/>
</dbReference>
<dbReference type="GO" id="GO:0005743">
    <property type="term" value="C:mitochondrial inner membrane"/>
    <property type="evidence" value="ECO:0000266"/>
    <property type="project" value="PomBase"/>
</dbReference>
<dbReference type="GO" id="GO:0005634">
    <property type="term" value="C:nucleus"/>
    <property type="evidence" value="ECO:0007005"/>
    <property type="project" value="PomBase"/>
</dbReference>
<dbReference type="GO" id="GO:0016531">
    <property type="term" value="F:copper chaperone activity"/>
    <property type="evidence" value="ECO:0000314"/>
    <property type="project" value="PomBase"/>
</dbReference>
<dbReference type="GO" id="GO:0046872">
    <property type="term" value="F:metal ion binding"/>
    <property type="evidence" value="ECO:0007669"/>
    <property type="project" value="UniProtKB-KW"/>
</dbReference>
<dbReference type="GO" id="GO:0016532">
    <property type="term" value="F:superoxide dismutase copper chaperone activity"/>
    <property type="evidence" value="ECO:0000315"/>
    <property type="project" value="PomBase"/>
</dbReference>
<dbReference type="GO" id="GO:0071248">
    <property type="term" value="P:cellular response to metal ion"/>
    <property type="evidence" value="ECO:0000315"/>
    <property type="project" value="PomBase"/>
</dbReference>
<dbReference type="GO" id="GO:0006878">
    <property type="term" value="P:intracellular copper ion homeostasis"/>
    <property type="evidence" value="ECO:0000315"/>
    <property type="project" value="PomBase"/>
</dbReference>
<dbReference type="GO" id="GO:0019430">
    <property type="term" value="P:removal of superoxide radicals"/>
    <property type="evidence" value="ECO:0000315"/>
    <property type="project" value="PomBase"/>
</dbReference>
<dbReference type="Gene3D" id="2.60.40.200">
    <property type="entry name" value="Superoxide dismutase, copper/zinc binding domain"/>
    <property type="match status" value="1"/>
</dbReference>
<dbReference type="InterPro" id="IPR036423">
    <property type="entry name" value="SOD-like_Cu/Zn_dom_sf"/>
</dbReference>
<dbReference type="SUPFAM" id="SSF49329">
    <property type="entry name" value="Cu,Zn superoxide dismutase-like"/>
    <property type="match status" value="1"/>
</dbReference>
<comment type="function">
    <text evidence="3">Copper chaperone for superoxide dismutase 1 (sod1). Binds copper ions and delivers them specifically to sod1. Also has a role in cell protection against copper ion toxicity during conditions of copper excess. The C-terminal region is thought to act specifically in this sequestration role.</text>
</comment>
<comment type="subcellular location">
    <subcellularLocation>
        <location evidence="3">Cytoplasm</location>
    </subcellularLocation>
</comment>
<comment type="similarity">
    <text evidence="4">Belongs to the CCS1 family.</text>
</comment>